<accession>P83140</accession>
<comment type="function">
    <text evidence="1">Possesses antifungal activity against F.graminearum.</text>
</comment>
<comment type="subunit">
    <text evidence="1">Heterodimer of a large and a small subunit.</text>
</comment>
<comment type="miscellaneous">
    <text evidence="1">Antimicrobial activity is not affected by salt concentration.</text>
</comment>
<evidence type="ECO:0000269" key="1">
    <source>
    </source>
</evidence>
<evidence type="ECO:0000303" key="2">
    <source>
    </source>
</evidence>
<evidence type="ECO:0000305" key="3"/>
<name>AFP1S_MALPA</name>
<dbReference type="GO" id="GO:0042742">
    <property type="term" value="P:defense response to bacterium"/>
    <property type="evidence" value="ECO:0007669"/>
    <property type="project" value="UniProtKB-KW"/>
</dbReference>
<dbReference type="GO" id="GO:0050832">
    <property type="term" value="P:defense response to fungus"/>
    <property type="evidence" value="ECO:0000314"/>
    <property type="project" value="UniProtKB"/>
</dbReference>
<dbReference type="GO" id="GO:0031640">
    <property type="term" value="P:killing of cells of another organism"/>
    <property type="evidence" value="ECO:0007669"/>
    <property type="project" value="UniProtKB-KW"/>
</dbReference>
<dbReference type="GO" id="GO:0006805">
    <property type="term" value="P:xenobiotic metabolic process"/>
    <property type="evidence" value="ECO:0000314"/>
    <property type="project" value="UniProtKB"/>
</dbReference>
<protein>
    <recommendedName>
        <fullName>Antifungal protein 1 small subunit</fullName>
    </recommendedName>
    <alternativeName>
        <fullName>CW-1</fullName>
    </alternativeName>
</protein>
<feature type="chain" id="PRO_0000064479" description="Antifungal protein 1 small subunit">
    <location>
        <begin position="1"/>
        <end position="16" status="greater than"/>
    </location>
</feature>
<feature type="non-terminal residue" evidence="2">
    <location>
        <position position="16"/>
    </location>
</feature>
<reference evidence="3" key="1">
    <citation type="journal article" date="2000" name="Biochem. Biophys. Res. Commun.">
        <title>Potent heterologous antifungal proteins from cheeseweed (Malva parviflora).</title>
        <authorList>
            <person name="Wang X."/>
            <person name="Bunkers G.J."/>
        </authorList>
    </citation>
    <scope>PROTEIN SEQUENCE</scope>
    <scope>FUNCTION</scope>
    <source>
        <tissue>Seed</tissue>
    </source>
</reference>
<organism evidence="3">
    <name type="scientific">Malva parviflora</name>
    <name type="common">Little mallow</name>
    <name type="synonym">Cheeseweed mallow</name>
    <dbReference type="NCBI Taxonomy" id="145753"/>
    <lineage>
        <taxon>Eukaryota</taxon>
        <taxon>Viridiplantae</taxon>
        <taxon>Streptophyta</taxon>
        <taxon>Embryophyta</taxon>
        <taxon>Tracheophyta</taxon>
        <taxon>Spermatophyta</taxon>
        <taxon>Magnoliopsida</taxon>
        <taxon>eudicotyledons</taxon>
        <taxon>Gunneridae</taxon>
        <taxon>Pentapetalae</taxon>
        <taxon>rosids</taxon>
        <taxon>malvids</taxon>
        <taxon>Malvales</taxon>
        <taxon>Malvaceae</taxon>
        <taxon>Malvoideae</taxon>
        <taxon>Malva</taxon>
    </lineage>
</organism>
<proteinExistence type="evidence at protein level"/>
<keyword id="KW-0044">Antibiotic</keyword>
<keyword id="KW-0929">Antimicrobial</keyword>
<keyword id="KW-0903">Direct protein sequencing</keyword>
<keyword id="KW-0295">Fungicide</keyword>
<sequence length="16" mass="1891">PAGPFRIPPRXRXEFQ</sequence>